<gene>
    <name type="primary">mrpl9</name>
    <name type="ORF">NCU06749</name>
</gene>
<dbReference type="EMBL" id="CM002237">
    <property type="protein sequence ID" value="EAA34285.1"/>
    <property type="molecule type" value="Genomic_DNA"/>
</dbReference>
<dbReference type="RefSeq" id="XP_963521.1">
    <property type="nucleotide sequence ID" value="XM_958428.2"/>
</dbReference>
<dbReference type="PDB" id="6YWS">
    <property type="method" value="EM"/>
    <property type="resolution" value="2.74 A"/>
    <property type="chains" value="C=1-384"/>
</dbReference>
<dbReference type="PDB" id="6YWV">
    <property type="method" value="EM"/>
    <property type="resolution" value="3.03 A"/>
    <property type="chains" value="C=1-384"/>
</dbReference>
<dbReference type="PDB" id="6YWX">
    <property type="method" value="EM"/>
    <property type="resolution" value="3.10 A"/>
    <property type="chains" value="C=1-384"/>
</dbReference>
<dbReference type="PDBsum" id="6YWS"/>
<dbReference type="PDBsum" id="6YWV"/>
<dbReference type="PDBsum" id="6YWX"/>
<dbReference type="EMDB" id="EMD-10973"/>
<dbReference type="EMDB" id="EMD-10977"/>
<dbReference type="EMDB" id="EMD-10978"/>
<dbReference type="SMR" id="Q1K8T6"/>
<dbReference type="FunCoup" id="Q1K8T6">
    <property type="interactions" value="815"/>
</dbReference>
<dbReference type="STRING" id="367110.Q1K8T6"/>
<dbReference type="PaxDb" id="5141-EFNCRP00000006896"/>
<dbReference type="EnsemblFungi" id="EAA34285">
    <property type="protein sequence ID" value="EAA34285"/>
    <property type="gene ID" value="NCU06749"/>
</dbReference>
<dbReference type="GeneID" id="3879682"/>
<dbReference type="KEGG" id="ncr:NCU06749"/>
<dbReference type="VEuPathDB" id="FungiDB:NCU06749"/>
<dbReference type="HOGENOM" id="CLU_044142_0_0_1"/>
<dbReference type="InParanoid" id="Q1K8T6"/>
<dbReference type="OMA" id="GKNIPCT"/>
<dbReference type="OrthoDB" id="274683at2759"/>
<dbReference type="Proteomes" id="UP000001805">
    <property type="component" value="Chromosome 6, Linkage Group II"/>
</dbReference>
<dbReference type="GO" id="GO:0005762">
    <property type="term" value="C:mitochondrial large ribosomal subunit"/>
    <property type="evidence" value="ECO:0000318"/>
    <property type="project" value="GO_Central"/>
</dbReference>
<dbReference type="GO" id="GO:0003735">
    <property type="term" value="F:structural constituent of ribosome"/>
    <property type="evidence" value="ECO:0000318"/>
    <property type="project" value="GO_Central"/>
</dbReference>
<dbReference type="GO" id="GO:0006412">
    <property type="term" value="P:translation"/>
    <property type="evidence" value="ECO:0007669"/>
    <property type="project" value="InterPro"/>
</dbReference>
<dbReference type="FunFam" id="2.40.30.10:FF:000004">
    <property type="entry name" value="50S ribosomal protein L3"/>
    <property type="match status" value="1"/>
</dbReference>
<dbReference type="FunFam" id="3.30.160.810:FF:000001">
    <property type="entry name" value="50S ribosomal protein L3"/>
    <property type="match status" value="1"/>
</dbReference>
<dbReference type="Gene3D" id="3.30.160.810">
    <property type="match status" value="1"/>
</dbReference>
<dbReference type="Gene3D" id="2.40.30.10">
    <property type="entry name" value="Translation factors"/>
    <property type="match status" value="1"/>
</dbReference>
<dbReference type="InterPro" id="IPR000597">
    <property type="entry name" value="Ribosomal_uL3"/>
</dbReference>
<dbReference type="InterPro" id="IPR019927">
    <property type="entry name" value="Ribosomal_uL3_bac/org-type"/>
</dbReference>
<dbReference type="InterPro" id="IPR009000">
    <property type="entry name" value="Transl_B-barrel_sf"/>
</dbReference>
<dbReference type="NCBIfam" id="TIGR03625">
    <property type="entry name" value="L3_bact"/>
    <property type="match status" value="1"/>
</dbReference>
<dbReference type="PANTHER" id="PTHR11229">
    <property type="entry name" value="50S RIBOSOMAL PROTEIN L3"/>
    <property type="match status" value="1"/>
</dbReference>
<dbReference type="PANTHER" id="PTHR11229:SF8">
    <property type="entry name" value="LARGE RIBOSOMAL SUBUNIT PROTEIN UL3M"/>
    <property type="match status" value="1"/>
</dbReference>
<dbReference type="Pfam" id="PF00297">
    <property type="entry name" value="Ribosomal_L3"/>
    <property type="match status" value="1"/>
</dbReference>
<dbReference type="SUPFAM" id="SSF50447">
    <property type="entry name" value="Translation proteins"/>
    <property type="match status" value="1"/>
</dbReference>
<protein>
    <recommendedName>
        <fullName evidence="4">Large ribosomal subunit protein uL3m</fullName>
    </recommendedName>
</protein>
<feature type="chain" id="PRO_0000458604" description="Large ribosomal subunit protein uL3m">
    <location>
        <begin position="1"/>
        <end position="384"/>
    </location>
</feature>
<feature type="region of interest" description="Disordered" evidence="1">
    <location>
        <begin position="80"/>
        <end position="101"/>
    </location>
</feature>
<feature type="region of interest" description="Disordered" evidence="1">
    <location>
        <begin position="237"/>
        <end position="262"/>
    </location>
</feature>
<feature type="compositionally biased region" description="Polar residues" evidence="1">
    <location>
        <begin position="240"/>
        <end position="249"/>
    </location>
</feature>
<comment type="function">
    <text evidence="6">Component of the mitochondrial ribosome (mitoribosome), a dedicated translation machinery responsible for the synthesis of mitochondrial genome-encoded proteins, including at least some of the essential transmembrane subunits of the mitochondrial respiratory chain. The mitoribosomes are attached to the mitochondrial inner membrane and translation products are cotranslationally integrated into the membrane.</text>
</comment>
<comment type="subunit">
    <text evidence="2 3">Component of the mitochondrial large ribosomal subunit (mt-LSU). Mature N.crassa 74S mitochondrial ribosomes consist of a small (37S) and a large (54S) subunit. The 37S small subunit contains a 16S ribosomal RNA (16S mt-rRNA) and 32 different proteins. The 54S large subunit contains a 23S rRNA (23S mt-rRNA) and 42 different proteins.</text>
</comment>
<comment type="subcellular location">
    <subcellularLocation>
        <location evidence="2 3">Mitochondrion</location>
    </subcellularLocation>
</comment>
<comment type="similarity">
    <text evidence="5">Belongs to the universal ribosomal protein uL3 family.</text>
</comment>
<evidence type="ECO:0000256" key="1">
    <source>
        <dbReference type="SAM" id="MobiDB-lite"/>
    </source>
</evidence>
<evidence type="ECO:0000269" key="2">
    <source>
    </source>
</evidence>
<evidence type="ECO:0000269" key="3">
    <source>
    </source>
</evidence>
<evidence type="ECO:0000303" key="4">
    <source>
    </source>
</evidence>
<evidence type="ECO:0000305" key="5"/>
<evidence type="ECO:0000305" key="6">
    <source>
    </source>
</evidence>
<evidence type="ECO:0007744" key="7">
    <source>
        <dbReference type="PDB" id="6YWS"/>
    </source>
</evidence>
<evidence type="ECO:0007744" key="8">
    <source>
        <dbReference type="PDB" id="6YWV"/>
    </source>
</evidence>
<organism>
    <name type="scientific">Neurospora crassa (strain ATCC 24698 / 74-OR23-1A / CBS 708.71 / DSM 1257 / FGSC 987)</name>
    <dbReference type="NCBI Taxonomy" id="367110"/>
    <lineage>
        <taxon>Eukaryota</taxon>
        <taxon>Fungi</taxon>
        <taxon>Dikarya</taxon>
        <taxon>Ascomycota</taxon>
        <taxon>Pezizomycotina</taxon>
        <taxon>Sordariomycetes</taxon>
        <taxon>Sordariomycetidae</taxon>
        <taxon>Sordariales</taxon>
        <taxon>Sordariaceae</taxon>
        <taxon>Neurospora</taxon>
    </lineage>
</organism>
<name>RM09_NEUCR</name>
<keyword id="KW-0002">3D-structure</keyword>
<keyword id="KW-0496">Mitochondrion</keyword>
<keyword id="KW-1185">Reference proteome</keyword>
<keyword id="KW-0687">Ribonucleoprotein</keyword>
<keyword id="KW-0689">Ribosomal protein</keyword>
<reference key="1">
    <citation type="journal article" date="2003" name="Nature">
        <title>The genome sequence of the filamentous fungus Neurospora crassa.</title>
        <authorList>
            <person name="Galagan J.E."/>
            <person name="Calvo S.E."/>
            <person name="Borkovich K.A."/>
            <person name="Selker E.U."/>
            <person name="Read N.D."/>
            <person name="Jaffe D.B."/>
            <person name="FitzHugh W."/>
            <person name="Ma L.-J."/>
            <person name="Smirnov S."/>
            <person name="Purcell S."/>
            <person name="Rehman B."/>
            <person name="Elkins T."/>
            <person name="Engels R."/>
            <person name="Wang S."/>
            <person name="Nielsen C.B."/>
            <person name="Butler J."/>
            <person name="Endrizzi M."/>
            <person name="Qui D."/>
            <person name="Ianakiev P."/>
            <person name="Bell-Pedersen D."/>
            <person name="Nelson M.A."/>
            <person name="Werner-Washburne M."/>
            <person name="Selitrennikoff C.P."/>
            <person name="Kinsey J.A."/>
            <person name="Braun E.L."/>
            <person name="Zelter A."/>
            <person name="Schulte U."/>
            <person name="Kothe G.O."/>
            <person name="Jedd G."/>
            <person name="Mewes H.-W."/>
            <person name="Staben C."/>
            <person name="Marcotte E."/>
            <person name="Greenberg D."/>
            <person name="Roy A."/>
            <person name="Foley K."/>
            <person name="Naylor J."/>
            <person name="Stange-Thomann N."/>
            <person name="Barrett R."/>
            <person name="Gnerre S."/>
            <person name="Kamal M."/>
            <person name="Kamvysselis M."/>
            <person name="Mauceli E.W."/>
            <person name="Bielke C."/>
            <person name="Rudd S."/>
            <person name="Frishman D."/>
            <person name="Krystofova S."/>
            <person name="Rasmussen C."/>
            <person name="Metzenberg R.L."/>
            <person name="Perkins D.D."/>
            <person name="Kroken S."/>
            <person name="Cogoni C."/>
            <person name="Macino G."/>
            <person name="Catcheside D.E.A."/>
            <person name="Li W."/>
            <person name="Pratt R.J."/>
            <person name="Osmani S.A."/>
            <person name="DeSouza C.P.C."/>
            <person name="Glass N.L."/>
            <person name="Orbach M.J."/>
            <person name="Berglund J.A."/>
            <person name="Voelker R."/>
            <person name="Yarden O."/>
            <person name="Plamann M."/>
            <person name="Seiler S."/>
            <person name="Dunlap J.C."/>
            <person name="Radford A."/>
            <person name="Aramayo R."/>
            <person name="Natvig D.O."/>
            <person name="Alex L.A."/>
            <person name="Mannhaupt G."/>
            <person name="Ebbole D.J."/>
            <person name="Freitag M."/>
            <person name="Paulsen I."/>
            <person name="Sachs M.S."/>
            <person name="Lander E.S."/>
            <person name="Nusbaum C."/>
            <person name="Birren B.W."/>
        </authorList>
    </citation>
    <scope>NUCLEOTIDE SEQUENCE [LARGE SCALE GENOMIC DNA]</scope>
    <source>
        <strain>ATCC 24698 / 74-OR23-1A / CBS 708.71 / DSM 1257 / FGSC 987</strain>
    </source>
</reference>
<reference key="2">
    <citation type="journal article" date="2006" name="FEMS Microbiol. Lett.">
        <title>Identification and comparative analysis of the large subunit mitochondrial ribosomal proteins of Neurospora crassa.</title>
        <authorList>
            <person name="Gan X."/>
            <person name="Arita K."/>
            <person name="Isono S."/>
            <person name="Kitakawa M."/>
            <person name="Yoshino K."/>
            <person name="Yonezawa K."/>
            <person name="Kato A."/>
            <person name="Inoue H."/>
            <person name="Isono K."/>
        </authorList>
    </citation>
    <scope>IDENTIFICATION IN THE MITOCHONDRIAL RIBOSOMAL LARGE COMPLEX</scope>
    <scope>IDENTIFICATION BY MASS SPECTROMETRY</scope>
</reference>
<reference evidence="7 8" key="3">
    <citation type="journal article" date="2020" name="Nat. Commun.">
        <title>Analysis of translating mitoribosome reveals functional characteristics of translation in mitochondria of fungi.</title>
        <authorList>
            <person name="Itoh Y."/>
            <person name="Naschberger A."/>
            <person name="Mortezaei N."/>
            <person name="Herrmann J.M."/>
            <person name="Amunts A."/>
        </authorList>
    </citation>
    <scope>STRUCTURE BY ELECTRON MICROSCOPY (2.74 ANGSTROMS)</scope>
</reference>
<sequence>MAPRLPARCWRQLSLVERSATHTTTTAAASSLLLAGRTTPTFSASSPSTVFPSLLPQITKRGVKYGWSTLPKRSRPTRFNQVTQGLPAPTSGPAAALKRREKTTPLRTGVLAVKKGMTVFMGRTGARIPCTVLQLDRVQVVANKTRAKNGYWAVQVGLGERRAENVGAPQLGYYEAKGIPPKQTLAEFKVRNQDGLLPVGVQLFPDWFHVGQVVDVRGITRGMGFAGGMKRHGFAGQEASHGNSLNHRTIGSVGGSQGSGSRVLPGKKMPGRMGAQQHTVQNLPILMVDNELGIVVVKGAVAGHKGAVVKVQDAVKKAPPPEEFVEATKQLLNERFPDAEEKLQAARKLHLELKEARRQGLIDSLIKNGLTEKADGNAAVEASA</sequence>
<accession>Q1K8T6</accession>
<proteinExistence type="evidence at protein level"/>